<accession>Q7UP92</accession>
<protein>
    <recommendedName>
        <fullName evidence="1">Guanylate kinase</fullName>
        <ecNumber evidence="1">2.7.4.8</ecNumber>
    </recommendedName>
    <alternativeName>
        <fullName evidence="1">GMP kinase</fullName>
    </alternativeName>
</protein>
<comment type="function">
    <text evidence="1">Essential for recycling GMP and indirectly, cGMP.</text>
</comment>
<comment type="catalytic activity">
    <reaction evidence="1">
        <text>GMP + ATP = GDP + ADP</text>
        <dbReference type="Rhea" id="RHEA:20780"/>
        <dbReference type="ChEBI" id="CHEBI:30616"/>
        <dbReference type="ChEBI" id="CHEBI:58115"/>
        <dbReference type="ChEBI" id="CHEBI:58189"/>
        <dbReference type="ChEBI" id="CHEBI:456216"/>
        <dbReference type="EC" id="2.7.4.8"/>
    </reaction>
</comment>
<comment type="subcellular location">
    <subcellularLocation>
        <location evidence="1">Cytoplasm</location>
    </subcellularLocation>
</comment>
<comment type="similarity">
    <text evidence="1">Belongs to the guanylate kinase family.</text>
</comment>
<dbReference type="EC" id="2.7.4.8" evidence="1"/>
<dbReference type="EMBL" id="BX294145">
    <property type="protein sequence ID" value="CAD75170.1"/>
    <property type="molecule type" value="Genomic_DNA"/>
</dbReference>
<dbReference type="RefSeq" id="NP_867623.1">
    <property type="nucleotide sequence ID" value="NC_005027.1"/>
</dbReference>
<dbReference type="RefSeq" id="WP_007326728.1">
    <property type="nucleotide sequence ID" value="NC_005027.1"/>
</dbReference>
<dbReference type="SMR" id="Q7UP92"/>
<dbReference type="FunCoup" id="Q7UP92">
    <property type="interactions" value="470"/>
</dbReference>
<dbReference type="STRING" id="243090.RB7090"/>
<dbReference type="EnsemblBacteria" id="CAD75170">
    <property type="protein sequence ID" value="CAD75170"/>
    <property type="gene ID" value="RB7090"/>
</dbReference>
<dbReference type="KEGG" id="rba:RB7090"/>
<dbReference type="PATRIC" id="fig|243090.15.peg.3429"/>
<dbReference type="eggNOG" id="COG0194">
    <property type="taxonomic scope" value="Bacteria"/>
</dbReference>
<dbReference type="HOGENOM" id="CLU_001715_1_2_0"/>
<dbReference type="InParanoid" id="Q7UP92"/>
<dbReference type="OrthoDB" id="9808150at2"/>
<dbReference type="Proteomes" id="UP000001025">
    <property type="component" value="Chromosome"/>
</dbReference>
<dbReference type="GO" id="GO:0005829">
    <property type="term" value="C:cytosol"/>
    <property type="evidence" value="ECO:0000318"/>
    <property type="project" value="GO_Central"/>
</dbReference>
<dbReference type="GO" id="GO:0005524">
    <property type="term" value="F:ATP binding"/>
    <property type="evidence" value="ECO:0007669"/>
    <property type="project" value="UniProtKB-UniRule"/>
</dbReference>
<dbReference type="GO" id="GO:0004385">
    <property type="term" value="F:guanylate kinase activity"/>
    <property type="evidence" value="ECO:0000318"/>
    <property type="project" value="GO_Central"/>
</dbReference>
<dbReference type="CDD" id="cd00071">
    <property type="entry name" value="GMPK"/>
    <property type="match status" value="1"/>
</dbReference>
<dbReference type="FunFam" id="3.30.63.10:FF:000005">
    <property type="entry name" value="Guanylate kinase"/>
    <property type="match status" value="1"/>
</dbReference>
<dbReference type="Gene3D" id="3.30.63.10">
    <property type="entry name" value="Guanylate Kinase phosphate binding domain"/>
    <property type="match status" value="1"/>
</dbReference>
<dbReference type="Gene3D" id="3.40.50.300">
    <property type="entry name" value="P-loop containing nucleotide triphosphate hydrolases"/>
    <property type="match status" value="1"/>
</dbReference>
<dbReference type="HAMAP" id="MF_00328">
    <property type="entry name" value="Guanylate_kinase"/>
    <property type="match status" value="1"/>
</dbReference>
<dbReference type="InterPro" id="IPR008145">
    <property type="entry name" value="GK/Ca_channel_bsu"/>
</dbReference>
<dbReference type="InterPro" id="IPR008144">
    <property type="entry name" value="Guanylate_kin-like_dom"/>
</dbReference>
<dbReference type="InterPro" id="IPR017665">
    <property type="entry name" value="Guanylate_kinase"/>
</dbReference>
<dbReference type="InterPro" id="IPR020590">
    <property type="entry name" value="Guanylate_kinase_CS"/>
</dbReference>
<dbReference type="InterPro" id="IPR027417">
    <property type="entry name" value="P-loop_NTPase"/>
</dbReference>
<dbReference type="NCBIfam" id="TIGR03263">
    <property type="entry name" value="guanyl_kin"/>
    <property type="match status" value="1"/>
</dbReference>
<dbReference type="PANTHER" id="PTHR23117:SF13">
    <property type="entry name" value="GUANYLATE KINASE"/>
    <property type="match status" value="1"/>
</dbReference>
<dbReference type="PANTHER" id="PTHR23117">
    <property type="entry name" value="GUANYLATE KINASE-RELATED"/>
    <property type="match status" value="1"/>
</dbReference>
<dbReference type="Pfam" id="PF00625">
    <property type="entry name" value="Guanylate_kin"/>
    <property type="match status" value="1"/>
</dbReference>
<dbReference type="SMART" id="SM00072">
    <property type="entry name" value="GuKc"/>
    <property type="match status" value="1"/>
</dbReference>
<dbReference type="SUPFAM" id="SSF52540">
    <property type="entry name" value="P-loop containing nucleoside triphosphate hydrolases"/>
    <property type="match status" value="1"/>
</dbReference>
<dbReference type="PROSITE" id="PS00856">
    <property type="entry name" value="GUANYLATE_KINASE_1"/>
    <property type="match status" value="1"/>
</dbReference>
<dbReference type="PROSITE" id="PS50052">
    <property type="entry name" value="GUANYLATE_KINASE_2"/>
    <property type="match status" value="1"/>
</dbReference>
<name>KGUA_RHOBA</name>
<organism>
    <name type="scientific">Rhodopirellula baltica (strain DSM 10527 / NCIMB 13988 / SH1)</name>
    <dbReference type="NCBI Taxonomy" id="243090"/>
    <lineage>
        <taxon>Bacteria</taxon>
        <taxon>Pseudomonadati</taxon>
        <taxon>Planctomycetota</taxon>
        <taxon>Planctomycetia</taxon>
        <taxon>Pirellulales</taxon>
        <taxon>Pirellulaceae</taxon>
        <taxon>Rhodopirellula</taxon>
    </lineage>
</organism>
<gene>
    <name evidence="1" type="primary">gmk</name>
    <name type="ordered locus">RB7090</name>
</gene>
<reference key="1">
    <citation type="journal article" date="2003" name="Proc. Natl. Acad. Sci. U.S.A.">
        <title>Complete genome sequence of the marine planctomycete Pirellula sp. strain 1.</title>
        <authorList>
            <person name="Gloeckner F.O."/>
            <person name="Kube M."/>
            <person name="Bauer M."/>
            <person name="Teeling H."/>
            <person name="Lombardot T."/>
            <person name="Ludwig W."/>
            <person name="Gade D."/>
            <person name="Beck A."/>
            <person name="Borzym K."/>
            <person name="Heitmann K."/>
            <person name="Rabus R."/>
            <person name="Schlesner H."/>
            <person name="Amann R."/>
            <person name="Reinhardt R."/>
        </authorList>
    </citation>
    <scope>NUCLEOTIDE SEQUENCE [LARGE SCALE GENOMIC DNA]</scope>
    <source>
        <strain>DSM 10527 / NCIMB 13988 / SH1</strain>
    </source>
</reference>
<evidence type="ECO:0000255" key="1">
    <source>
        <dbReference type="HAMAP-Rule" id="MF_00328"/>
    </source>
</evidence>
<keyword id="KW-0067">ATP-binding</keyword>
<keyword id="KW-0963">Cytoplasm</keyword>
<keyword id="KW-0418">Kinase</keyword>
<keyword id="KW-0547">Nucleotide-binding</keyword>
<keyword id="KW-1185">Reference proteome</keyword>
<keyword id="KW-0808">Transferase</keyword>
<sequence length="209" mass="23450">MNDPSCSSADETAHPGRLVIISGPSGAGKSTVVKQLMKRCDVPLQLSVSATTREPRPGEIHGQDYFFLSHEEFERRRKLNDFVECKQVFSMGQWYGTLKDQVATGLNAGKWVILEIDVQGAMAVLDDPHYRPVTIFVHPGSMEELERRLRNRGTESESSLTARLETAAAEMQCLSRYQYEIINESVDNAVTEICQILLDQRKTTPCSKN</sequence>
<feature type="chain" id="PRO_0000170593" description="Guanylate kinase">
    <location>
        <begin position="1"/>
        <end position="209"/>
    </location>
</feature>
<feature type="domain" description="Guanylate kinase-like" evidence="1">
    <location>
        <begin position="16"/>
        <end position="198"/>
    </location>
</feature>
<feature type="binding site" evidence="1">
    <location>
        <begin position="23"/>
        <end position="30"/>
    </location>
    <ligand>
        <name>ATP</name>
        <dbReference type="ChEBI" id="CHEBI:30616"/>
    </ligand>
</feature>
<proteinExistence type="inferred from homology"/>